<name>UBX4_YEAST</name>
<organism>
    <name type="scientific">Saccharomyces cerevisiae (strain ATCC 204508 / S288c)</name>
    <name type="common">Baker's yeast</name>
    <dbReference type="NCBI Taxonomy" id="559292"/>
    <lineage>
        <taxon>Eukaryota</taxon>
        <taxon>Fungi</taxon>
        <taxon>Dikarya</taxon>
        <taxon>Ascomycota</taxon>
        <taxon>Saccharomycotina</taxon>
        <taxon>Saccharomycetes</taxon>
        <taxon>Saccharomycetales</taxon>
        <taxon>Saccharomycetaceae</taxon>
        <taxon>Saccharomyces</taxon>
    </lineage>
</organism>
<evidence type="ECO:0000250" key="1"/>
<evidence type="ECO:0000255" key="2">
    <source>
        <dbReference type="PROSITE-ProRule" id="PRU00215"/>
    </source>
</evidence>
<evidence type="ECO:0000256" key="3">
    <source>
        <dbReference type="SAM" id="MobiDB-lite"/>
    </source>
</evidence>
<evidence type="ECO:0000269" key="4">
    <source>
    </source>
</evidence>
<evidence type="ECO:0000269" key="5">
    <source>
    </source>
</evidence>
<feature type="chain" id="PRO_0000211001" description="UBX domain-containing protein 4">
    <location>
        <begin position="1"/>
        <end position="416"/>
    </location>
</feature>
<feature type="domain" description="UBX" evidence="2">
    <location>
        <begin position="273"/>
        <end position="350"/>
    </location>
</feature>
<feature type="region of interest" description="Disordered" evidence="3">
    <location>
        <begin position="376"/>
        <end position="402"/>
    </location>
</feature>
<feature type="compositionally biased region" description="Polar residues" evidence="3">
    <location>
        <begin position="378"/>
        <end position="402"/>
    </location>
</feature>
<accession>P54730</accession>
<accession>D6VZP1</accession>
<dbReference type="EMBL" id="Z48952">
    <property type="protein sequence ID" value="CAA88792.1"/>
    <property type="molecule type" value="Genomic_DNA"/>
</dbReference>
<dbReference type="EMBL" id="BK006946">
    <property type="protein sequence ID" value="DAA09965.1"/>
    <property type="molecule type" value="Genomic_DNA"/>
</dbReference>
<dbReference type="PIR" id="S52827">
    <property type="entry name" value="S52827"/>
</dbReference>
<dbReference type="RefSeq" id="NP_013783.1">
    <property type="nucleotide sequence ID" value="NM_001182565.1"/>
</dbReference>
<dbReference type="SMR" id="P54730"/>
<dbReference type="BioGRID" id="35242">
    <property type="interactions" value="241"/>
</dbReference>
<dbReference type="DIP" id="DIP-5070N"/>
<dbReference type="FunCoup" id="P54730">
    <property type="interactions" value="63"/>
</dbReference>
<dbReference type="IntAct" id="P54730">
    <property type="interactions" value="4"/>
</dbReference>
<dbReference type="MINT" id="P54730"/>
<dbReference type="STRING" id="4932.YMR067C"/>
<dbReference type="iPTMnet" id="P54730"/>
<dbReference type="PaxDb" id="4932-YMR067C"/>
<dbReference type="PeptideAtlas" id="P54730"/>
<dbReference type="EnsemblFungi" id="YMR067C_mRNA">
    <property type="protein sequence ID" value="YMR067C"/>
    <property type="gene ID" value="YMR067C"/>
</dbReference>
<dbReference type="GeneID" id="855089"/>
<dbReference type="KEGG" id="sce:YMR067C"/>
<dbReference type="AGR" id="SGD:S000004671"/>
<dbReference type="SGD" id="S000004671">
    <property type="gene designation" value="UBX4"/>
</dbReference>
<dbReference type="VEuPathDB" id="FungiDB:YMR067C"/>
<dbReference type="eggNOG" id="KOG2699">
    <property type="taxonomic scope" value="Eukaryota"/>
</dbReference>
<dbReference type="HOGENOM" id="CLU_667421_0_0_1"/>
<dbReference type="InParanoid" id="P54730"/>
<dbReference type="OMA" id="FPDRTHI"/>
<dbReference type="OrthoDB" id="440781at2759"/>
<dbReference type="BioCyc" id="YEAST:G3O-32769-MONOMER"/>
<dbReference type="BioGRID-ORCS" id="855089">
    <property type="hits" value="4 hits in 10 CRISPR screens"/>
</dbReference>
<dbReference type="PRO" id="PR:P54730"/>
<dbReference type="Proteomes" id="UP000002311">
    <property type="component" value="Chromosome XIII"/>
</dbReference>
<dbReference type="RNAct" id="P54730">
    <property type="molecule type" value="protein"/>
</dbReference>
<dbReference type="GO" id="GO:0005737">
    <property type="term" value="C:cytoplasm"/>
    <property type="evidence" value="ECO:0007005"/>
    <property type="project" value="SGD"/>
</dbReference>
<dbReference type="GO" id="GO:0005634">
    <property type="term" value="C:nucleus"/>
    <property type="evidence" value="ECO:0000314"/>
    <property type="project" value="SGD"/>
</dbReference>
<dbReference type="GO" id="GO:0012506">
    <property type="term" value="C:vesicle membrane"/>
    <property type="evidence" value="ECO:0000318"/>
    <property type="project" value="GO_Central"/>
</dbReference>
<dbReference type="GO" id="GO:0044877">
    <property type="term" value="F:protein-containing complex binding"/>
    <property type="evidence" value="ECO:0000314"/>
    <property type="project" value="SGD"/>
</dbReference>
<dbReference type="GO" id="GO:0036503">
    <property type="term" value="P:ERAD pathway"/>
    <property type="evidence" value="ECO:0000315"/>
    <property type="project" value="SGD"/>
</dbReference>
<dbReference type="GO" id="GO:0006886">
    <property type="term" value="P:intracellular protein transport"/>
    <property type="evidence" value="ECO:0000318"/>
    <property type="project" value="GO_Central"/>
</dbReference>
<dbReference type="GO" id="GO:0030435">
    <property type="term" value="P:sporulation resulting in formation of a cellular spore"/>
    <property type="evidence" value="ECO:0000315"/>
    <property type="project" value="SGD"/>
</dbReference>
<dbReference type="CDD" id="cd16105">
    <property type="entry name" value="Ubl_ASPSCR1_like"/>
    <property type="match status" value="1"/>
</dbReference>
<dbReference type="Gene3D" id="3.10.20.90">
    <property type="entry name" value="Phosphatidylinositol 3-kinase Catalytic Subunit, Chain A, domain 1"/>
    <property type="match status" value="2"/>
</dbReference>
<dbReference type="InterPro" id="IPR021569">
    <property type="entry name" value="TUG-UBL1"/>
</dbReference>
<dbReference type="InterPro" id="IPR029071">
    <property type="entry name" value="Ubiquitin-like_domsf"/>
</dbReference>
<dbReference type="InterPro" id="IPR001012">
    <property type="entry name" value="UBX_dom"/>
</dbReference>
<dbReference type="PANTHER" id="PTHR46467">
    <property type="entry name" value="TETHER CONTAINING UBX DOMAIN FOR GLUT4"/>
    <property type="match status" value="1"/>
</dbReference>
<dbReference type="PANTHER" id="PTHR46467:SF1">
    <property type="entry name" value="TETHER CONTAINING UBX DOMAIN FOR GLUT4"/>
    <property type="match status" value="1"/>
</dbReference>
<dbReference type="Pfam" id="PF11470">
    <property type="entry name" value="TUG-UBL1"/>
    <property type="match status" value="1"/>
</dbReference>
<dbReference type="Pfam" id="PF00789">
    <property type="entry name" value="UBX"/>
    <property type="match status" value="1"/>
</dbReference>
<dbReference type="SMART" id="SM00166">
    <property type="entry name" value="UBX"/>
    <property type="match status" value="1"/>
</dbReference>
<dbReference type="SUPFAM" id="SSF54236">
    <property type="entry name" value="Ubiquitin-like"/>
    <property type="match status" value="2"/>
</dbReference>
<dbReference type="PROSITE" id="PS50033">
    <property type="entry name" value="UBX"/>
    <property type="match status" value="1"/>
</dbReference>
<gene>
    <name type="primary">UBX4</name>
    <name type="ordered locus">YMR067C</name>
    <name type="ORF">YM9916.06C</name>
</gene>
<protein>
    <recommendedName>
        <fullName>UBX domain-containing protein 4</fullName>
    </recommendedName>
</protein>
<comment type="function">
    <text evidence="1">Involved in CDC48-dependent protein degradation through the ubiquitin/proteasome pathway.</text>
</comment>
<comment type="interaction">
    <interactant intactId="EBI-28127">
        <id>P54730</id>
    </interactant>
    <interactant intactId="EBI-4308">
        <id>P25694</id>
        <label>CDC48</label>
    </interactant>
    <organismsDiffer>false</organismsDiffer>
    <experiments>6</experiments>
</comment>
<comment type="subcellular location">
    <subcellularLocation>
        <location evidence="4">Nucleus</location>
    </subcellularLocation>
    <subcellularLocation>
        <location evidence="4">Cytoplasm</location>
    </subcellularLocation>
</comment>
<comment type="miscellaneous">
    <text evidence="5">Present with 3570 molecules/cell in log phase SD medium.</text>
</comment>
<proteinExistence type="evidence at protein level"/>
<reference key="1">
    <citation type="journal article" date="1997" name="Nature">
        <title>The nucleotide sequence of Saccharomyces cerevisiae chromosome XIII.</title>
        <authorList>
            <person name="Bowman S."/>
            <person name="Churcher C.M."/>
            <person name="Badcock K."/>
            <person name="Brown D."/>
            <person name="Chillingworth T."/>
            <person name="Connor R."/>
            <person name="Dedman K."/>
            <person name="Devlin K."/>
            <person name="Gentles S."/>
            <person name="Hamlin N."/>
            <person name="Hunt S."/>
            <person name="Jagels K."/>
            <person name="Lye G."/>
            <person name="Moule S."/>
            <person name="Odell C."/>
            <person name="Pearson D."/>
            <person name="Rajandream M.A."/>
            <person name="Rice P."/>
            <person name="Skelton J."/>
            <person name="Walsh S.V."/>
            <person name="Whitehead S."/>
            <person name="Barrell B.G."/>
        </authorList>
    </citation>
    <scope>NUCLEOTIDE SEQUENCE [LARGE SCALE GENOMIC DNA]</scope>
    <source>
        <strain>ATCC 204508 / S288c</strain>
    </source>
</reference>
<reference key="2">
    <citation type="journal article" date="2014" name="G3 (Bethesda)">
        <title>The reference genome sequence of Saccharomyces cerevisiae: Then and now.</title>
        <authorList>
            <person name="Engel S.R."/>
            <person name="Dietrich F.S."/>
            <person name="Fisk D.G."/>
            <person name="Binkley G."/>
            <person name="Balakrishnan R."/>
            <person name="Costanzo M.C."/>
            <person name="Dwight S.S."/>
            <person name="Hitz B.C."/>
            <person name="Karra K."/>
            <person name="Nash R.S."/>
            <person name="Weng S."/>
            <person name="Wong E.D."/>
            <person name="Lloyd P."/>
            <person name="Skrzypek M.S."/>
            <person name="Miyasato S.R."/>
            <person name="Simison M."/>
            <person name="Cherry J.M."/>
        </authorList>
    </citation>
    <scope>GENOME REANNOTATION</scope>
    <source>
        <strain>ATCC 204508 / S288c</strain>
    </source>
</reference>
<reference key="3">
    <citation type="journal article" date="2003" name="Nature">
        <title>Global analysis of protein localization in budding yeast.</title>
        <authorList>
            <person name="Huh W.-K."/>
            <person name="Falvo J.V."/>
            <person name="Gerke L.C."/>
            <person name="Carroll A.S."/>
            <person name="Howson R.W."/>
            <person name="Weissman J.S."/>
            <person name="O'Shea E.K."/>
        </authorList>
    </citation>
    <scope>SUBCELLULAR LOCATION [LARGE SCALE ANALYSIS]</scope>
</reference>
<reference key="4">
    <citation type="journal article" date="2003" name="Nature">
        <title>Global analysis of protein expression in yeast.</title>
        <authorList>
            <person name="Ghaemmaghami S."/>
            <person name="Huh W.-K."/>
            <person name="Bower K."/>
            <person name="Howson R.W."/>
            <person name="Belle A."/>
            <person name="Dephoure N."/>
            <person name="O'Shea E.K."/>
            <person name="Weissman J.S."/>
        </authorList>
    </citation>
    <scope>LEVEL OF PROTEIN EXPRESSION [LARGE SCALE ANALYSIS]</scope>
</reference>
<reference key="5">
    <citation type="journal article" date="2004" name="EMBO Rep.">
        <title>Shp1 and Ubx2 are adaptors of Cdc48 involved in ubiquitin-dependent protein degradation.</title>
        <authorList>
            <person name="Schuberth C."/>
            <person name="Richly H."/>
            <person name="Rumpf S."/>
            <person name="Buchberger A."/>
        </authorList>
    </citation>
    <scope>INTERACTION WITH CDC48</scope>
</reference>
<sequence>MPMVTVKYNFQLFKCKVSLNSTLNDVLHQSIQFFQLHTSSNDWSLIHLDKPVPLDLPWRLLNLPTGVNLELSKSSNFPVANKTNREDIPFNTIKIRFQIPGRDSVVKEMPSDQPIAPILRQMSGAAGDDFKIQVFSKIIEFKTIKDENLTLENLGIQEPSSVRLIFNNTSHSEGISANSAIHPKQTPPTMTNPETVASLPPHELHKPSVFLPSDEPLAVIKDQIEDEEDYELTVEQAKKYQKMLSSKAGTLGGPILTKRLREQSANNLPKKNKAISECLLRVKFPDRSHIQIAFKPNEDMRTVYNVVSQFLIDENMPFTLNQSHPFKPLAKDDKKLLDDLEFGSKTMLLFETNSNSNGPLIKAHLLEDAQKITHETRTTPSVNTINKSNPQGPSDNATSIKKTLNRVPKWMKLSKK</sequence>
<keyword id="KW-0963">Cytoplasm</keyword>
<keyword id="KW-0539">Nucleus</keyword>
<keyword id="KW-1185">Reference proteome</keyword>
<keyword id="KW-0833">Ubl conjugation pathway</keyword>